<proteinExistence type="evidence at transcript level"/>
<feature type="chain" id="PRO_0000090874" description="Mothers against decapentaplegic homolog 7">
    <location>
        <begin position="1"/>
        <end position="426"/>
    </location>
</feature>
<feature type="domain" description="MH1" evidence="4">
    <location>
        <begin position="64"/>
        <end position="207"/>
    </location>
</feature>
<feature type="domain" description="MH2" evidence="5">
    <location>
        <begin position="261"/>
        <end position="426"/>
    </location>
</feature>
<feature type="region of interest" description="Disordered" evidence="6">
    <location>
        <begin position="14"/>
        <end position="40"/>
    </location>
</feature>
<feature type="region of interest" description="Disordered" evidence="6">
    <location>
        <begin position="67"/>
        <end position="88"/>
    </location>
</feature>
<feature type="region of interest" description="Important for interaction with SMURF2" evidence="1">
    <location>
        <begin position="208"/>
        <end position="217"/>
    </location>
</feature>
<feature type="short sequence motif" description="PY-motif" evidence="1">
    <location>
        <begin position="208"/>
        <end position="211"/>
    </location>
</feature>
<feature type="compositionally biased region" description="Gly residues" evidence="6">
    <location>
        <begin position="28"/>
        <end position="39"/>
    </location>
</feature>
<feature type="compositionally biased region" description="Basic residues" evidence="6">
    <location>
        <begin position="67"/>
        <end position="76"/>
    </location>
</feature>
<feature type="binding site" evidence="1">
    <location>
        <position position="125"/>
    </location>
    <ligand>
        <name>Zn(2+)</name>
        <dbReference type="ChEBI" id="CHEBI:29105"/>
    </ligand>
</feature>
<feature type="binding site" evidence="1">
    <location>
        <position position="180"/>
    </location>
    <ligand>
        <name>Zn(2+)</name>
        <dbReference type="ChEBI" id="CHEBI:29105"/>
    </ligand>
</feature>
<feature type="binding site" evidence="1">
    <location>
        <position position="192"/>
    </location>
    <ligand>
        <name>Zn(2+)</name>
        <dbReference type="ChEBI" id="CHEBI:29105"/>
    </ligand>
</feature>
<feature type="binding site" evidence="1">
    <location>
        <position position="197"/>
    </location>
    <ligand>
        <name>Zn(2+)</name>
        <dbReference type="ChEBI" id="CHEBI:29105"/>
    </ligand>
</feature>
<feature type="modified residue" description="N6-acetyllysine; alternate" evidence="2">
    <location>
        <position position="64"/>
    </location>
</feature>
<feature type="modified residue" description="N6-acetyllysine; alternate" evidence="2">
    <location>
        <position position="70"/>
    </location>
</feature>
<feature type="modified residue" description="Phosphoserine" evidence="3 5">
    <location>
        <position position="249"/>
    </location>
</feature>
<feature type="cross-link" description="Glycyl lysine isopeptide (Lys-Gly) (interchain with G-Cter in ubiquitin); alternate" evidence="2">
    <location>
        <position position="64"/>
    </location>
</feature>
<feature type="cross-link" description="Glycyl lysine isopeptide (Lys-Gly) (interchain with G-Cter in ubiquitin); alternate" evidence="2">
    <location>
        <position position="70"/>
    </location>
</feature>
<feature type="sequence conflict" description="In Ref. 2; AAF00608/AAD41130." evidence="7" ref="2">
    <original>G</original>
    <variation>D</variation>
    <location>
        <position position="36"/>
    </location>
</feature>
<feature type="sequence conflict" description="In Ref. 1; AAC25062." evidence="7" ref="1">
    <location>
        <position position="193"/>
    </location>
</feature>
<reference key="1">
    <citation type="journal article" date="2000" name="Mamm. Genome">
        <title>Genomic locus and promoter region of rat Smad7, an important antagonist of TGFbeta signaling.</title>
        <authorList>
            <person name="Stopa M."/>
            <person name="Benes V."/>
            <person name="Ansorge W."/>
            <person name="Gressner A.M."/>
            <person name="Dooley S."/>
        </authorList>
    </citation>
    <scope>NUCLEOTIDE SEQUENCE [GENOMIC DNA / MRNA]</scope>
</reference>
<reference key="2">
    <citation type="journal article" date="2001" name="Endocrinology">
        <title>Regulation and actions of Smad7 in the modulation of activin, inhibin, and transforming growth factor-beta signaling in anterior pituitary cells.</title>
        <authorList>
            <person name="Bilezikjian L.M."/>
            <person name="Corrigan A.Z."/>
            <person name="Blount A.L."/>
            <person name="Chen Y."/>
            <person name="Vale W.W."/>
        </authorList>
    </citation>
    <scope>NUCLEOTIDE SEQUENCE [MRNA]</scope>
</reference>
<accession>O88406</accession>
<accession>Q9QUG1</accession>
<gene>
    <name type="primary">Smad7</name>
    <name type="synonym">Madh7</name>
</gene>
<protein>
    <recommendedName>
        <fullName>Mothers against decapentaplegic homolog 7</fullName>
        <shortName>MAD homolog 7</shortName>
        <shortName>Mothers against DPP homolog 7</shortName>
    </recommendedName>
    <alternativeName>
        <fullName>SMAD family member 7</fullName>
        <shortName>SMAD 7</shortName>
        <shortName>Smad7</shortName>
    </alternativeName>
</protein>
<name>SMAD7_RAT</name>
<comment type="function">
    <text evidence="2">Antagonist of signaling by TGF-beta (transforming growth factor) type 1 receptor superfamily members; has been shown to inhibit TGF-beta (Transforming growth factor) and activin signaling by associating with their receptors thus preventing SMAD2 access. Functions as an adapter to recruit SMURF2 to the TGF-beta receptor complex. Also acts by recruiting the PPP1R15A-PP1 complex to TGFBR1, which promotes its dephosphorylation. Positively regulates PDPK1 kinase activity by stimulating its dissociation from the 14-3-3 protein YWHAQ which acts as a negative regulator.</text>
</comment>
<comment type="subunit">
    <text evidence="1 2">Interacts with COPS5. Interacts with STAMBP. Interacts with NEDD4L. Interacts with RNF111, AXIN1 and AXIN2. Interacts with PPP1R15A. Interacts with ACVR1B, SMURF1, SMURF2 and TGFBR1; SMAD7 recruits SMURF1 and SMURF2 to the TGF-beta receptor and regulates its degradation. Interacts with WWP1 (By similarity). Interacts with PDPK1 (via PH domain) (By similarity). Interacts with TSC22D1/TSC-22; the interaction requires TGF-beta and the interaction is inhibited by TGFBR1 (By similarity).</text>
</comment>
<comment type="subcellular location">
    <subcellularLocation>
        <location evidence="2">Nucleus</location>
    </subcellularLocation>
    <subcellularLocation>
        <location evidence="2">Cytoplasm</location>
    </subcellularLocation>
    <text evidence="2">Interaction with NEDD4L or RNF111 induces translocation from the nucleus to the cytoplasm. TGF-beta stimulates its translocation from the nucleus to the cytoplasm. PDPK1 inhibits its translocation from the nucleus to the cytoplasm in response to TGF-beta.</text>
</comment>
<comment type="tissue specificity">
    <text>Ubiquitous.</text>
</comment>
<comment type="PTM">
    <text evidence="2 3">Phosphorylation on Ser-249 does not affect its stability, nuclear localization or inhibitory function in TGFB signaling; however it affects its ability to regulate transcription (By similarity). Phosphorylated by PDPK1 (By similarity).</text>
</comment>
<comment type="PTM">
    <text evidence="2 3">Ubiquitinated by WWP1 (By similarity). Polyubiquitinated by RNF111, which is enhanced by AXIN1 and promotes proteasomal degradation. In response to TGF-beta, ubiquitinated by SMURF1; which promotes its degradation (By similarity).</text>
</comment>
<comment type="PTM">
    <text evidence="2">Acetylation prevents ubiquitination and degradation mediated by SMURF1.</text>
</comment>
<comment type="similarity">
    <text evidence="7">Belongs to the dwarfin/SMAD family.</text>
</comment>
<dbReference type="EMBL" id="AF156730">
    <property type="protein sequence ID" value="AAF00608.1"/>
    <property type="molecule type" value="Genomic_DNA"/>
</dbReference>
<dbReference type="EMBL" id="AF156727">
    <property type="protein sequence ID" value="AAF00608.1"/>
    <property type="status" value="JOINED"/>
    <property type="molecule type" value="Genomic_DNA"/>
</dbReference>
<dbReference type="EMBL" id="AF156728">
    <property type="protein sequence ID" value="AAF00608.1"/>
    <property type="status" value="JOINED"/>
    <property type="molecule type" value="Genomic_DNA"/>
</dbReference>
<dbReference type="EMBL" id="AF156729">
    <property type="protein sequence ID" value="AAF00608.1"/>
    <property type="status" value="JOINED"/>
    <property type="molecule type" value="Genomic_DNA"/>
</dbReference>
<dbReference type="EMBL" id="AF159626">
    <property type="protein sequence ID" value="AAD41130.1"/>
    <property type="molecule type" value="mRNA"/>
</dbReference>
<dbReference type="EMBL" id="AF042499">
    <property type="protein sequence ID" value="AAC25062.1"/>
    <property type="molecule type" value="mRNA"/>
</dbReference>
<dbReference type="RefSeq" id="NP_110485.1">
    <property type="nucleotide sequence ID" value="NM_030858.1"/>
</dbReference>
<dbReference type="BMRB" id="O88406"/>
<dbReference type="SMR" id="O88406"/>
<dbReference type="BioGRID" id="249513">
    <property type="interactions" value="3"/>
</dbReference>
<dbReference type="FunCoup" id="O88406">
    <property type="interactions" value="1309"/>
</dbReference>
<dbReference type="IntAct" id="O88406">
    <property type="interactions" value="1"/>
</dbReference>
<dbReference type="MINT" id="O88406"/>
<dbReference type="STRING" id="10116.ENSRNOP00000024831"/>
<dbReference type="PhosphoSitePlus" id="O88406"/>
<dbReference type="PaxDb" id="10116-ENSRNOP00000024831"/>
<dbReference type="GeneID" id="81516"/>
<dbReference type="KEGG" id="rno:81516"/>
<dbReference type="AGR" id="RGD:69314"/>
<dbReference type="CTD" id="4092"/>
<dbReference type="RGD" id="69314">
    <property type="gene designation" value="Smad7"/>
</dbReference>
<dbReference type="eggNOG" id="KOG3701">
    <property type="taxonomic scope" value="Eukaryota"/>
</dbReference>
<dbReference type="InParanoid" id="O88406"/>
<dbReference type="OrthoDB" id="5946219at2759"/>
<dbReference type="PhylomeDB" id="O88406"/>
<dbReference type="TreeFam" id="TF314923"/>
<dbReference type="Reactome" id="R-RNO-201451">
    <property type="pathway name" value="Signaling by BMP"/>
</dbReference>
<dbReference type="Reactome" id="R-RNO-2173788">
    <property type="pathway name" value="Downregulation of TGF-beta receptor signaling"/>
</dbReference>
<dbReference type="Reactome" id="R-RNO-2173796">
    <property type="pathway name" value="SMAD2/SMAD3:SMAD4 heterotrimer regulates transcription"/>
</dbReference>
<dbReference type="Reactome" id="R-RNO-5689880">
    <property type="pathway name" value="Ub-specific processing proteases"/>
</dbReference>
<dbReference type="PRO" id="PR:O88406"/>
<dbReference type="Proteomes" id="UP000002494">
    <property type="component" value="Unplaced"/>
</dbReference>
<dbReference type="GO" id="GO:0005912">
    <property type="term" value="C:adherens junction"/>
    <property type="evidence" value="ECO:0000266"/>
    <property type="project" value="RGD"/>
</dbReference>
<dbReference type="GO" id="GO:0005737">
    <property type="term" value="C:cytoplasm"/>
    <property type="evidence" value="ECO:0000266"/>
    <property type="project" value="RGD"/>
</dbReference>
<dbReference type="GO" id="GO:0071144">
    <property type="term" value="C:heteromeric SMAD protein complex"/>
    <property type="evidence" value="ECO:0000318"/>
    <property type="project" value="GO_Central"/>
</dbReference>
<dbReference type="GO" id="GO:0005634">
    <property type="term" value="C:nucleus"/>
    <property type="evidence" value="ECO:0000266"/>
    <property type="project" value="RGD"/>
</dbReference>
<dbReference type="GO" id="GO:0005886">
    <property type="term" value="C:plasma membrane"/>
    <property type="evidence" value="ECO:0000266"/>
    <property type="project" value="RGD"/>
</dbReference>
<dbReference type="GO" id="GO:0032991">
    <property type="term" value="C:protein-containing complex"/>
    <property type="evidence" value="ECO:0000266"/>
    <property type="project" value="RGD"/>
</dbReference>
<dbReference type="GO" id="GO:0070697">
    <property type="term" value="F:activin receptor binding"/>
    <property type="evidence" value="ECO:0000266"/>
    <property type="project" value="RGD"/>
</dbReference>
<dbReference type="GO" id="GO:0008013">
    <property type="term" value="F:beta-catenin binding"/>
    <property type="evidence" value="ECO:0000266"/>
    <property type="project" value="RGD"/>
</dbReference>
<dbReference type="GO" id="GO:0005518">
    <property type="term" value="F:collagen binding"/>
    <property type="evidence" value="ECO:0000266"/>
    <property type="project" value="RGD"/>
</dbReference>
<dbReference type="GO" id="GO:0070411">
    <property type="term" value="F:I-SMAD binding"/>
    <property type="evidence" value="ECO:0000266"/>
    <property type="project" value="RGD"/>
</dbReference>
<dbReference type="GO" id="GO:0046872">
    <property type="term" value="F:metal ion binding"/>
    <property type="evidence" value="ECO:0007669"/>
    <property type="project" value="UniProtKB-KW"/>
</dbReference>
<dbReference type="GO" id="GO:0003714">
    <property type="term" value="F:transcription corepressor activity"/>
    <property type="evidence" value="ECO:0000266"/>
    <property type="project" value="RGD"/>
</dbReference>
<dbReference type="GO" id="GO:0140416">
    <property type="term" value="F:transcription regulator inhibitor activity"/>
    <property type="evidence" value="ECO:0000266"/>
    <property type="project" value="RGD"/>
</dbReference>
<dbReference type="GO" id="GO:0034713">
    <property type="term" value="F:type I transforming growth factor beta receptor binding"/>
    <property type="evidence" value="ECO:0000266"/>
    <property type="project" value="RGD"/>
</dbReference>
<dbReference type="GO" id="GO:0031625">
    <property type="term" value="F:ubiquitin protein ligase binding"/>
    <property type="evidence" value="ECO:0000353"/>
    <property type="project" value="RGD"/>
</dbReference>
<dbReference type="GO" id="GO:1990756">
    <property type="term" value="F:ubiquitin-like ligase-substrate adaptor activity"/>
    <property type="evidence" value="ECO:0000266"/>
    <property type="project" value="RGD"/>
</dbReference>
<dbReference type="GO" id="GO:0034333">
    <property type="term" value="P:adherens junction assembly"/>
    <property type="evidence" value="ECO:0000266"/>
    <property type="project" value="RGD"/>
</dbReference>
<dbReference type="GO" id="GO:0009653">
    <property type="term" value="P:anatomical structure morphogenesis"/>
    <property type="evidence" value="ECO:0000318"/>
    <property type="project" value="GO_Central"/>
</dbReference>
<dbReference type="GO" id="GO:0048844">
    <property type="term" value="P:artery morphogenesis"/>
    <property type="evidence" value="ECO:0000266"/>
    <property type="project" value="RGD"/>
</dbReference>
<dbReference type="GO" id="GO:1904886">
    <property type="term" value="P:beta-catenin destruction complex disassembly"/>
    <property type="evidence" value="ECO:0000266"/>
    <property type="project" value="RGD"/>
</dbReference>
<dbReference type="GO" id="GO:0030154">
    <property type="term" value="P:cell differentiation"/>
    <property type="evidence" value="ECO:0000318"/>
    <property type="project" value="GO_Central"/>
</dbReference>
<dbReference type="GO" id="GO:1990830">
    <property type="term" value="P:cellular response to leukemia inhibitory factor"/>
    <property type="evidence" value="ECO:0000266"/>
    <property type="project" value="RGD"/>
</dbReference>
<dbReference type="GO" id="GO:0035556">
    <property type="term" value="P:intracellular signal transduction"/>
    <property type="evidence" value="ECO:0000314"/>
    <property type="project" value="RGD"/>
</dbReference>
<dbReference type="GO" id="GO:0032926">
    <property type="term" value="P:negative regulation of activin receptor signaling pathway"/>
    <property type="evidence" value="ECO:0000266"/>
    <property type="project" value="RGD"/>
</dbReference>
<dbReference type="GO" id="GO:0030514">
    <property type="term" value="P:negative regulation of BMP signaling pathway"/>
    <property type="evidence" value="ECO:0000266"/>
    <property type="project" value="RGD"/>
</dbReference>
<dbReference type="GO" id="GO:1902731">
    <property type="term" value="P:negative regulation of chondrocyte proliferation"/>
    <property type="evidence" value="ECO:0000266"/>
    <property type="project" value="RGD"/>
</dbReference>
<dbReference type="GO" id="GO:0045892">
    <property type="term" value="P:negative regulation of DNA-templated transcription"/>
    <property type="evidence" value="ECO:0000270"/>
    <property type="project" value="RGD"/>
</dbReference>
<dbReference type="GO" id="GO:0030279">
    <property type="term" value="P:negative regulation of ossification"/>
    <property type="evidence" value="ECO:0000266"/>
    <property type="project" value="RGD"/>
</dbReference>
<dbReference type="GO" id="GO:0060392">
    <property type="term" value="P:negative regulation of SMAD protein signal transduction"/>
    <property type="evidence" value="ECO:0000266"/>
    <property type="project" value="RGD"/>
</dbReference>
<dbReference type="GO" id="GO:0002725">
    <property type="term" value="P:negative regulation of T cell cytokine production"/>
    <property type="evidence" value="ECO:0000266"/>
    <property type="project" value="RGD"/>
</dbReference>
<dbReference type="GO" id="GO:2000320">
    <property type="term" value="P:negative regulation of T-helper 17 cell differentiation"/>
    <property type="evidence" value="ECO:0000266"/>
    <property type="project" value="RGD"/>
</dbReference>
<dbReference type="GO" id="GO:2000317">
    <property type="term" value="P:negative regulation of T-helper 17 type immune response"/>
    <property type="evidence" value="ECO:0000266"/>
    <property type="project" value="RGD"/>
</dbReference>
<dbReference type="GO" id="GO:0010944">
    <property type="term" value="P:negative regulation of transcription by competitive promoter binding"/>
    <property type="evidence" value="ECO:0000266"/>
    <property type="project" value="RGD"/>
</dbReference>
<dbReference type="GO" id="GO:0000122">
    <property type="term" value="P:negative regulation of transcription by RNA polymerase II"/>
    <property type="evidence" value="ECO:0000266"/>
    <property type="project" value="RGD"/>
</dbReference>
<dbReference type="GO" id="GO:0030512">
    <property type="term" value="P:negative regulation of transforming growth factor beta receptor signaling pathway"/>
    <property type="evidence" value="ECO:0000250"/>
    <property type="project" value="UniProtKB"/>
</dbReference>
<dbReference type="GO" id="GO:2000049">
    <property type="term" value="P:positive regulation of cell-cell adhesion mediated by cadherin"/>
    <property type="evidence" value="ECO:0000266"/>
    <property type="project" value="RGD"/>
</dbReference>
<dbReference type="GO" id="GO:1903043">
    <property type="term" value="P:positive regulation of chondrocyte hypertrophy"/>
    <property type="evidence" value="ECO:0000266"/>
    <property type="project" value="RGD"/>
</dbReference>
<dbReference type="GO" id="GO:0050821">
    <property type="term" value="P:protein stabilization"/>
    <property type="evidence" value="ECO:0000266"/>
    <property type="project" value="RGD"/>
</dbReference>
<dbReference type="GO" id="GO:0032984">
    <property type="term" value="P:protein-containing complex disassembly"/>
    <property type="evidence" value="ECO:0000266"/>
    <property type="project" value="RGD"/>
</dbReference>
<dbReference type="GO" id="GO:0031503">
    <property type="term" value="P:protein-containing complex localization"/>
    <property type="evidence" value="ECO:0000266"/>
    <property type="project" value="RGD"/>
</dbReference>
<dbReference type="GO" id="GO:0055117">
    <property type="term" value="P:regulation of cardiac muscle contraction"/>
    <property type="evidence" value="ECO:0000266"/>
    <property type="project" value="RGD"/>
</dbReference>
<dbReference type="GO" id="GO:0010717">
    <property type="term" value="P:regulation of epithelial to mesenchymal transition"/>
    <property type="evidence" value="ECO:0000266"/>
    <property type="project" value="RGD"/>
</dbReference>
<dbReference type="GO" id="GO:0006357">
    <property type="term" value="P:regulation of transcription by RNA polymerase II"/>
    <property type="evidence" value="ECO:0000318"/>
    <property type="project" value="GO_Central"/>
</dbReference>
<dbReference type="GO" id="GO:0017015">
    <property type="term" value="P:regulation of transforming growth factor beta receptor signaling pathway"/>
    <property type="evidence" value="ECO:0000314"/>
    <property type="project" value="RGD"/>
</dbReference>
<dbReference type="GO" id="GO:0060373">
    <property type="term" value="P:regulation of ventricular cardiac muscle cell membrane depolarization"/>
    <property type="evidence" value="ECO:0000266"/>
    <property type="project" value="RGD"/>
</dbReference>
<dbReference type="GO" id="GO:0034616">
    <property type="term" value="P:response to laminar fluid shear stress"/>
    <property type="evidence" value="ECO:0000266"/>
    <property type="project" value="RGD"/>
</dbReference>
<dbReference type="GO" id="GO:0060395">
    <property type="term" value="P:SMAD protein signal transduction"/>
    <property type="evidence" value="ECO:0000266"/>
    <property type="project" value="RGD"/>
</dbReference>
<dbReference type="GO" id="GO:0007179">
    <property type="term" value="P:transforming growth factor beta receptor signaling pathway"/>
    <property type="evidence" value="ECO:0000266"/>
    <property type="project" value="RGD"/>
</dbReference>
<dbReference type="GO" id="GO:0001657">
    <property type="term" value="P:ureteric bud development"/>
    <property type="evidence" value="ECO:0000266"/>
    <property type="project" value="RGD"/>
</dbReference>
<dbReference type="GO" id="GO:0055010">
    <property type="term" value="P:ventricular cardiac muscle tissue morphogenesis"/>
    <property type="evidence" value="ECO:0000266"/>
    <property type="project" value="RGD"/>
</dbReference>
<dbReference type="GO" id="GO:0060412">
    <property type="term" value="P:ventricular septum morphogenesis"/>
    <property type="evidence" value="ECO:0000266"/>
    <property type="project" value="RGD"/>
</dbReference>
<dbReference type="CDD" id="cd10494">
    <property type="entry name" value="MH1_SMAD_7"/>
    <property type="match status" value="1"/>
</dbReference>
<dbReference type="CDD" id="cd10500">
    <property type="entry name" value="MH2_SMAD_7"/>
    <property type="match status" value="1"/>
</dbReference>
<dbReference type="FunFam" id="2.60.200.10:FF:000004">
    <property type="entry name" value="Mothers against decapentaplegic homolog"/>
    <property type="match status" value="1"/>
</dbReference>
<dbReference type="FunFam" id="3.90.520.10:FF:000003">
    <property type="entry name" value="Mothers against decapentaplegic homolog"/>
    <property type="match status" value="1"/>
</dbReference>
<dbReference type="Gene3D" id="2.60.200.10">
    <property type="match status" value="1"/>
</dbReference>
<dbReference type="Gene3D" id="3.90.520.10">
    <property type="entry name" value="SMAD MH1 domain"/>
    <property type="match status" value="1"/>
</dbReference>
<dbReference type="InterPro" id="IPR013790">
    <property type="entry name" value="Dwarfin"/>
</dbReference>
<dbReference type="InterPro" id="IPR003619">
    <property type="entry name" value="MAD_homology1_Dwarfin-type"/>
</dbReference>
<dbReference type="InterPro" id="IPR013019">
    <property type="entry name" value="MAD_homology_MH1"/>
</dbReference>
<dbReference type="InterPro" id="IPR017855">
    <property type="entry name" value="SMAD-like_dom_sf"/>
</dbReference>
<dbReference type="InterPro" id="IPR001132">
    <property type="entry name" value="SMAD_dom_Dwarfin-type"/>
</dbReference>
<dbReference type="InterPro" id="IPR008984">
    <property type="entry name" value="SMAD_FHA_dom_sf"/>
</dbReference>
<dbReference type="InterPro" id="IPR036578">
    <property type="entry name" value="SMAD_MH1_sf"/>
</dbReference>
<dbReference type="PANTHER" id="PTHR13703:SF44">
    <property type="entry name" value="MOTHERS AGAINST DECAPENTAPLEGIC HOMOLOG 7"/>
    <property type="match status" value="1"/>
</dbReference>
<dbReference type="PANTHER" id="PTHR13703">
    <property type="entry name" value="SMAD"/>
    <property type="match status" value="1"/>
</dbReference>
<dbReference type="Pfam" id="PF03165">
    <property type="entry name" value="MH1"/>
    <property type="match status" value="1"/>
</dbReference>
<dbReference type="Pfam" id="PF03166">
    <property type="entry name" value="MH2"/>
    <property type="match status" value="1"/>
</dbReference>
<dbReference type="SMART" id="SM00523">
    <property type="entry name" value="DWA"/>
    <property type="match status" value="1"/>
</dbReference>
<dbReference type="SMART" id="SM00524">
    <property type="entry name" value="DWB"/>
    <property type="match status" value="1"/>
</dbReference>
<dbReference type="SUPFAM" id="SSF56366">
    <property type="entry name" value="SMAD MH1 domain"/>
    <property type="match status" value="1"/>
</dbReference>
<dbReference type="SUPFAM" id="SSF49879">
    <property type="entry name" value="SMAD/FHA domain"/>
    <property type="match status" value="1"/>
</dbReference>
<dbReference type="PROSITE" id="PS51075">
    <property type="entry name" value="MH1"/>
    <property type="match status" value="1"/>
</dbReference>
<dbReference type="PROSITE" id="PS51076">
    <property type="entry name" value="MH2"/>
    <property type="match status" value="1"/>
</dbReference>
<evidence type="ECO:0000250" key="1"/>
<evidence type="ECO:0000250" key="2">
    <source>
        <dbReference type="UniProtKB" id="O15105"/>
    </source>
</evidence>
<evidence type="ECO:0000250" key="3">
    <source>
        <dbReference type="UniProtKB" id="O35253"/>
    </source>
</evidence>
<evidence type="ECO:0000255" key="4">
    <source>
        <dbReference type="PROSITE-ProRule" id="PRU00438"/>
    </source>
</evidence>
<evidence type="ECO:0000255" key="5">
    <source>
        <dbReference type="PROSITE-ProRule" id="PRU00439"/>
    </source>
</evidence>
<evidence type="ECO:0000256" key="6">
    <source>
        <dbReference type="SAM" id="MobiDB-lite"/>
    </source>
</evidence>
<evidence type="ECO:0000305" key="7"/>
<sequence length="426" mass="46458">MFRTKRSALVRRLWRSRAPGGEDEEEGVGGGGGGGGLRGEGATDGRAYGAGGGGAGRAGCCLGKAVRGAKGHHHPHPPSSGAGAAGGAEADLKALTHSVLKKLKERQLELLLQAVESRGGTRTACLLLPGRLDCRLGPGAPASAQPAQPPSSYSLPLLLCKVFRWPDLRHSSEVKRLCCCESYGKINPELVCCNPHHLSRLCELESPPPPYSRYPMDFLKPTADCPDAVPSSDETGGTNYLAPGGLSDSQLLLEPGDRSHWCVVAYWEEKTRVGRLYCVQEPSLDIFYDLPQGNGFCLGQLNSDNKSQLVQKVRSKIGCGIQLTREVDGVWVYNRSSYPIFIKSATLDNPDSRTLLVHKVFPGFSIKAFDYEKAYSLQRPNDHEFMQQPWTGFTVQISFVKGWGQCYTRQFISSCPCWLEVIFNSR</sequence>
<organism>
    <name type="scientific">Rattus norvegicus</name>
    <name type="common">Rat</name>
    <dbReference type="NCBI Taxonomy" id="10116"/>
    <lineage>
        <taxon>Eukaryota</taxon>
        <taxon>Metazoa</taxon>
        <taxon>Chordata</taxon>
        <taxon>Craniata</taxon>
        <taxon>Vertebrata</taxon>
        <taxon>Euteleostomi</taxon>
        <taxon>Mammalia</taxon>
        <taxon>Eutheria</taxon>
        <taxon>Euarchontoglires</taxon>
        <taxon>Glires</taxon>
        <taxon>Rodentia</taxon>
        <taxon>Myomorpha</taxon>
        <taxon>Muroidea</taxon>
        <taxon>Muridae</taxon>
        <taxon>Murinae</taxon>
        <taxon>Rattus</taxon>
    </lineage>
</organism>
<keyword id="KW-0007">Acetylation</keyword>
<keyword id="KW-0963">Cytoplasm</keyword>
<keyword id="KW-1017">Isopeptide bond</keyword>
<keyword id="KW-0479">Metal-binding</keyword>
<keyword id="KW-0539">Nucleus</keyword>
<keyword id="KW-0597">Phosphoprotein</keyword>
<keyword id="KW-1185">Reference proteome</keyword>
<keyword id="KW-0804">Transcription</keyword>
<keyword id="KW-0805">Transcription regulation</keyword>
<keyword id="KW-0832">Ubl conjugation</keyword>
<keyword id="KW-0862">Zinc</keyword>